<accession>Q2FFH6</accession>
<protein>
    <recommendedName>
        <fullName evidence="1">Probable manganese-dependent inorganic pyrophosphatase</fullName>
        <ecNumber evidence="1">3.6.1.1</ecNumber>
    </recommendedName>
    <alternativeName>
        <fullName evidence="1">Pyrophosphate phospho-hydrolase</fullName>
        <shortName evidence="1">PPase</shortName>
    </alternativeName>
</protein>
<sequence>MAKTYIFGHKNPDTDAISSAIIMAEFEQLRGNSGAKAYRLGDVSAETQFALDTFNVPAPELLTDDLDGQDVILVDHNEFQQSSDTIASATIKHVIDHHRIANFETAGPLCYRAEPVGCTATILYKMFRERGFEIKPEIAGLMLSAIISDSLLFKSPTCTQQDVKAAEELKDIAKVDIQKYGLDMLKAGASTTDKSVEFLLNMDAKSFTMGDYVTRIAQVNAVDLDEVLNRKEDLEKEMLAVSAQEKYDLFVLVVTDIINSDSKILVVGAEKDKVGEAFNVQLEDDMAFLSGVVSRKKQIVPQITEALTK</sequence>
<name>PPAC_STAA3</name>
<feature type="chain" id="PRO_1000012319" description="Probable manganese-dependent inorganic pyrophosphatase">
    <location>
        <begin position="1"/>
        <end position="309"/>
    </location>
</feature>
<feature type="binding site" evidence="1">
    <location>
        <position position="9"/>
    </location>
    <ligand>
        <name>Mn(2+)</name>
        <dbReference type="ChEBI" id="CHEBI:29035"/>
        <label>1</label>
    </ligand>
</feature>
<feature type="binding site" evidence="1">
    <location>
        <position position="13"/>
    </location>
    <ligand>
        <name>Mn(2+)</name>
        <dbReference type="ChEBI" id="CHEBI:29035"/>
        <label>1</label>
    </ligand>
</feature>
<feature type="binding site" evidence="1">
    <location>
        <position position="15"/>
    </location>
    <ligand>
        <name>Mn(2+)</name>
        <dbReference type="ChEBI" id="CHEBI:29035"/>
        <label>2</label>
    </ligand>
</feature>
<feature type="binding site" evidence="1">
    <location>
        <position position="75"/>
    </location>
    <ligand>
        <name>Mn(2+)</name>
        <dbReference type="ChEBI" id="CHEBI:29035"/>
        <label>1</label>
    </ligand>
</feature>
<feature type="binding site" evidence="1">
    <location>
        <position position="75"/>
    </location>
    <ligand>
        <name>Mn(2+)</name>
        <dbReference type="ChEBI" id="CHEBI:29035"/>
        <label>2</label>
    </ligand>
</feature>
<feature type="binding site" evidence="1">
    <location>
        <position position="97"/>
    </location>
    <ligand>
        <name>Mn(2+)</name>
        <dbReference type="ChEBI" id="CHEBI:29035"/>
        <label>2</label>
    </ligand>
</feature>
<feature type="binding site" evidence="1">
    <location>
        <position position="149"/>
    </location>
    <ligand>
        <name>Mn(2+)</name>
        <dbReference type="ChEBI" id="CHEBI:29035"/>
        <label>2</label>
    </ligand>
</feature>
<dbReference type="EC" id="3.6.1.1" evidence="1"/>
<dbReference type="EMBL" id="CP000255">
    <property type="protein sequence ID" value="ABD22368.1"/>
    <property type="molecule type" value="Genomic_DNA"/>
</dbReference>
<dbReference type="RefSeq" id="WP_001140871.1">
    <property type="nucleotide sequence ID" value="NZ_CP027476.1"/>
</dbReference>
<dbReference type="SMR" id="Q2FFH6"/>
<dbReference type="KEGG" id="saa:SAUSA300_1900"/>
<dbReference type="HOGENOM" id="CLU_025243_0_1_9"/>
<dbReference type="OMA" id="VGCSNTI"/>
<dbReference type="Proteomes" id="UP000001939">
    <property type="component" value="Chromosome"/>
</dbReference>
<dbReference type="GO" id="GO:0005737">
    <property type="term" value="C:cytoplasm"/>
    <property type="evidence" value="ECO:0007669"/>
    <property type="project" value="UniProtKB-SubCell"/>
</dbReference>
<dbReference type="GO" id="GO:0004427">
    <property type="term" value="F:inorganic diphosphate phosphatase activity"/>
    <property type="evidence" value="ECO:0007669"/>
    <property type="project" value="UniProtKB-UniRule"/>
</dbReference>
<dbReference type="GO" id="GO:0030145">
    <property type="term" value="F:manganese ion binding"/>
    <property type="evidence" value="ECO:0007669"/>
    <property type="project" value="UniProtKB-UniRule"/>
</dbReference>
<dbReference type="FunFam" id="3.10.310.20:FF:000001">
    <property type="entry name" value="Probable manganese-dependent inorganic pyrophosphatase"/>
    <property type="match status" value="1"/>
</dbReference>
<dbReference type="FunFam" id="3.90.1640.10:FF:000001">
    <property type="entry name" value="Probable manganese-dependent inorganic pyrophosphatase"/>
    <property type="match status" value="1"/>
</dbReference>
<dbReference type="Gene3D" id="3.10.310.20">
    <property type="entry name" value="DHHA2 domain"/>
    <property type="match status" value="1"/>
</dbReference>
<dbReference type="Gene3D" id="3.90.1640.10">
    <property type="entry name" value="inorganic pyrophosphatase (n-terminal core)"/>
    <property type="match status" value="1"/>
</dbReference>
<dbReference type="HAMAP" id="MF_00207">
    <property type="entry name" value="PPase_C"/>
    <property type="match status" value="1"/>
</dbReference>
<dbReference type="InterPro" id="IPR001667">
    <property type="entry name" value="DDH_dom"/>
</dbReference>
<dbReference type="InterPro" id="IPR038763">
    <property type="entry name" value="DHH_sf"/>
</dbReference>
<dbReference type="InterPro" id="IPR004097">
    <property type="entry name" value="DHHA2"/>
</dbReference>
<dbReference type="InterPro" id="IPR038222">
    <property type="entry name" value="DHHA2_dom_sf"/>
</dbReference>
<dbReference type="InterPro" id="IPR022934">
    <property type="entry name" value="Mn-dep_inorganic_PyrPase"/>
</dbReference>
<dbReference type="NCBIfam" id="NF003877">
    <property type="entry name" value="PRK05427.1"/>
    <property type="match status" value="1"/>
</dbReference>
<dbReference type="PANTHER" id="PTHR12112">
    <property type="entry name" value="BNIP - RELATED"/>
    <property type="match status" value="1"/>
</dbReference>
<dbReference type="PANTHER" id="PTHR12112:SF22">
    <property type="entry name" value="MANGANESE-DEPENDENT INORGANIC PYROPHOSPHATASE-RELATED"/>
    <property type="match status" value="1"/>
</dbReference>
<dbReference type="Pfam" id="PF01368">
    <property type="entry name" value="DHH"/>
    <property type="match status" value="1"/>
</dbReference>
<dbReference type="Pfam" id="PF02833">
    <property type="entry name" value="DHHA2"/>
    <property type="match status" value="1"/>
</dbReference>
<dbReference type="SMART" id="SM01131">
    <property type="entry name" value="DHHA2"/>
    <property type="match status" value="1"/>
</dbReference>
<dbReference type="SUPFAM" id="SSF64182">
    <property type="entry name" value="DHH phosphoesterases"/>
    <property type="match status" value="1"/>
</dbReference>
<evidence type="ECO:0000255" key="1">
    <source>
        <dbReference type="HAMAP-Rule" id="MF_00207"/>
    </source>
</evidence>
<organism>
    <name type="scientific">Staphylococcus aureus (strain USA300)</name>
    <dbReference type="NCBI Taxonomy" id="367830"/>
    <lineage>
        <taxon>Bacteria</taxon>
        <taxon>Bacillati</taxon>
        <taxon>Bacillota</taxon>
        <taxon>Bacilli</taxon>
        <taxon>Bacillales</taxon>
        <taxon>Staphylococcaceae</taxon>
        <taxon>Staphylococcus</taxon>
    </lineage>
</organism>
<gene>
    <name evidence="1" type="primary">ppaC</name>
    <name type="ordered locus">SAUSA300_1900</name>
</gene>
<keyword id="KW-0963">Cytoplasm</keyword>
<keyword id="KW-0378">Hydrolase</keyword>
<keyword id="KW-0464">Manganese</keyword>
<keyword id="KW-0479">Metal-binding</keyword>
<reference key="1">
    <citation type="journal article" date="2006" name="Lancet">
        <title>Complete genome sequence of USA300, an epidemic clone of community-acquired meticillin-resistant Staphylococcus aureus.</title>
        <authorList>
            <person name="Diep B.A."/>
            <person name="Gill S.R."/>
            <person name="Chang R.F."/>
            <person name="Phan T.H."/>
            <person name="Chen J.H."/>
            <person name="Davidson M.G."/>
            <person name="Lin F."/>
            <person name="Lin J."/>
            <person name="Carleton H.A."/>
            <person name="Mongodin E.F."/>
            <person name="Sensabaugh G.F."/>
            <person name="Perdreau-Remington F."/>
        </authorList>
    </citation>
    <scope>NUCLEOTIDE SEQUENCE [LARGE SCALE GENOMIC DNA]</scope>
    <source>
        <strain>USA300</strain>
    </source>
</reference>
<comment type="catalytic activity">
    <reaction evidence="1">
        <text>diphosphate + H2O = 2 phosphate + H(+)</text>
        <dbReference type="Rhea" id="RHEA:24576"/>
        <dbReference type="ChEBI" id="CHEBI:15377"/>
        <dbReference type="ChEBI" id="CHEBI:15378"/>
        <dbReference type="ChEBI" id="CHEBI:33019"/>
        <dbReference type="ChEBI" id="CHEBI:43474"/>
        <dbReference type="EC" id="3.6.1.1"/>
    </reaction>
</comment>
<comment type="cofactor">
    <cofactor evidence="1">
        <name>Mn(2+)</name>
        <dbReference type="ChEBI" id="CHEBI:29035"/>
    </cofactor>
    <text evidence="1">Binds 2 manganese ions per subunit.</text>
</comment>
<comment type="subcellular location">
    <subcellularLocation>
        <location evidence="1">Cytoplasm</location>
    </subcellularLocation>
</comment>
<comment type="similarity">
    <text evidence="1">Belongs to the PPase class C family.</text>
</comment>
<proteinExistence type="inferred from homology"/>